<name>SYE_SHEPC</name>
<sequence length="469" mass="52640">MTTKTRFAPSPTGFLHVGGARTALYSWLQARANNGEFVLRIEDTDIERSTQAACDAILEGMNWLGLTWDEGPYYQTKRFDRYNEIIAQMLEKGTAYKCYCSRERIDALRESQAANGEAQKYDGCCRDLPARDTDEPFVVRFKNPIGGSVVFDDHVRGRIEFSNDALDDLIIARTDGVPTYNFCVVVDDWDMGITCVVRGEDHINNTPRQINILKALGAPIPEYAHVSMILGDDGAKLSKRHGAVSVMQYRDDGYLPEALLNYLVRLGWSHGDQEVFSLEEMKQYFKLDDINKAPSAFNTDKLVWLNQHYIKTLDPEYVATHLQWHMDDQKIDTSNGPALAEVVTALAERAKTLKELAASSRYFYEDFADFDAEQAKKHLRGVALEPLQLVQQKLAALTEWTVEAIHLAIEQTATELDVGMGKVGMPLRVAVTGAGQSPGLDITLFLIGRSRSEQRISKAIEFVADRINS</sequence>
<comment type="function">
    <text evidence="1">Catalyzes the attachment of glutamate to tRNA(Glu) in a two-step reaction: glutamate is first activated by ATP to form Glu-AMP and then transferred to the acceptor end of tRNA(Glu).</text>
</comment>
<comment type="catalytic activity">
    <reaction evidence="1">
        <text>tRNA(Glu) + L-glutamate + ATP = L-glutamyl-tRNA(Glu) + AMP + diphosphate</text>
        <dbReference type="Rhea" id="RHEA:23540"/>
        <dbReference type="Rhea" id="RHEA-COMP:9663"/>
        <dbReference type="Rhea" id="RHEA-COMP:9680"/>
        <dbReference type="ChEBI" id="CHEBI:29985"/>
        <dbReference type="ChEBI" id="CHEBI:30616"/>
        <dbReference type="ChEBI" id="CHEBI:33019"/>
        <dbReference type="ChEBI" id="CHEBI:78442"/>
        <dbReference type="ChEBI" id="CHEBI:78520"/>
        <dbReference type="ChEBI" id="CHEBI:456215"/>
        <dbReference type="EC" id="6.1.1.17"/>
    </reaction>
</comment>
<comment type="cofactor">
    <cofactor evidence="1">
        <name>Zn(2+)</name>
        <dbReference type="ChEBI" id="CHEBI:29105"/>
    </cofactor>
    <text evidence="1">Binds 1 zinc ion per subunit.</text>
</comment>
<comment type="subunit">
    <text evidence="1">Monomer.</text>
</comment>
<comment type="subcellular location">
    <subcellularLocation>
        <location evidence="1">Cytoplasm</location>
    </subcellularLocation>
</comment>
<comment type="similarity">
    <text evidence="1">Belongs to the class-I aminoacyl-tRNA synthetase family. Glutamate--tRNA ligase type 1 subfamily.</text>
</comment>
<keyword id="KW-0030">Aminoacyl-tRNA synthetase</keyword>
<keyword id="KW-0067">ATP-binding</keyword>
<keyword id="KW-0963">Cytoplasm</keyword>
<keyword id="KW-0436">Ligase</keyword>
<keyword id="KW-0479">Metal-binding</keyword>
<keyword id="KW-0547">Nucleotide-binding</keyword>
<keyword id="KW-0648">Protein biosynthesis</keyword>
<keyword id="KW-0862">Zinc</keyword>
<reference key="1">
    <citation type="submission" date="2007-04" db="EMBL/GenBank/DDBJ databases">
        <title>Complete sequence of Shewanella putrefaciens CN-32.</title>
        <authorList>
            <consortium name="US DOE Joint Genome Institute"/>
            <person name="Copeland A."/>
            <person name="Lucas S."/>
            <person name="Lapidus A."/>
            <person name="Barry K."/>
            <person name="Detter J.C."/>
            <person name="Glavina del Rio T."/>
            <person name="Hammon N."/>
            <person name="Israni S."/>
            <person name="Dalin E."/>
            <person name="Tice H."/>
            <person name="Pitluck S."/>
            <person name="Chain P."/>
            <person name="Malfatti S."/>
            <person name="Shin M."/>
            <person name="Vergez L."/>
            <person name="Schmutz J."/>
            <person name="Larimer F."/>
            <person name="Land M."/>
            <person name="Hauser L."/>
            <person name="Kyrpides N."/>
            <person name="Mikhailova N."/>
            <person name="Romine M.F."/>
            <person name="Fredrickson J."/>
            <person name="Tiedje J."/>
            <person name="Richardson P."/>
        </authorList>
    </citation>
    <scope>NUCLEOTIDE SEQUENCE [LARGE SCALE GENOMIC DNA]</scope>
    <source>
        <strain>CN-32 / ATCC BAA-453</strain>
    </source>
</reference>
<gene>
    <name evidence="1" type="primary">gltX</name>
    <name type="ordered locus">Sputcn32_2499</name>
</gene>
<feature type="chain" id="PRO_1000001960" description="Glutamate--tRNA ligase">
    <location>
        <begin position="1"/>
        <end position="469"/>
    </location>
</feature>
<feature type="short sequence motif" description="'HIGH' region" evidence="1">
    <location>
        <begin position="9"/>
        <end position="19"/>
    </location>
</feature>
<feature type="short sequence motif" description="'KMSKS' region" evidence="1">
    <location>
        <begin position="236"/>
        <end position="240"/>
    </location>
</feature>
<feature type="binding site" evidence="1">
    <location>
        <position position="98"/>
    </location>
    <ligand>
        <name>Zn(2+)</name>
        <dbReference type="ChEBI" id="CHEBI:29105"/>
    </ligand>
</feature>
<feature type="binding site" evidence="1">
    <location>
        <position position="100"/>
    </location>
    <ligand>
        <name>Zn(2+)</name>
        <dbReference type="ChEBI" id="CHEBI:29105"/>
    </ligand>
</feature>
<feature type="binding site" evidence="1">
    <location>
        <position position="125"/>
    </location>
    <ligand>
        <name>Zn(2+)</name>
        <dbReference type="ChEBI" id="CHEBI:29105"/>
    </ligand>
</feature>
<feature type="binding site" evidence="1">
    <location>
        <position position="127"/>
    </location>
    <ligand>
        <name>Zn(2+)</name>
        <dbReference type="ChEBI" id="CHEBI:29105"/>
    </ligand>
</feature>
<feature type="binding site" evidence="1">
    <location>
        <position position="239"/>
    </location>
    <ligand>
        <name>ATP</name>
        <dbReference type="ChEBI" id="CHEBI:30616"/>
    </ligand>
</feature>
<dbReference type="EC" id="6.1.1.17" evidence="1"/>
<dbReference type="EMBL" id="CP000681">
    <property type="protein sequence ID" value="ABP76220.1"/>
    <property type="molecule type" value="Genomic_DNA"/>
</dbReference>
<dbReference type="SMR" id="A4Y8D7"/>
<dbReference type="STRING" id="319224.Sputcn32_2499"/>
<dbReference type="KEGG" id="spc:Sputcn32_2499"/>
<dbReference type="eggNOG" id="COG0008">
    <property type="taxonomic scope" value="Bacteria"/>
</dbReference>
<dbReference type="HOGENOM" id="CLU_015768_6_3_6"/>
<dbReference type="GO" id="GO:0005829">
    <property type="term" value="C:cytosol"/>
    <property type="evidence" value="ECO:0007669"/>
    <property type="project" value="TreeGrafter"/>
</dbReference>
<dbReference type="GO" id="GO:0005524">
    <property type="term" value="F:ATP binding"/>
    <property type="evidence" value="ECO:0007669"/>
    <property type="project" value="UniProtKB-UniRule"/>
</dbReference>
<dbReference type="GO" id="GO:0004818">
    <property type="term" value="F:glutamate-tRNA ligase activity"/>
    <property type="evidence" value="ECO:0007669"/>
    <property type="project" value="UniProtKB-UniRule"/>
</dbReference>
<dbReference type="GO" id="GO:0000049">
    <property type="term" value="F:tRNA binding"/>
    <property type="evidence" value="ECO:0007669"/>
    <property type="project" value="InterPro"/>
</dbReference>
<dbReference type="GO" id="GO:0008270">
    <property type="term" value="F:zinc ion binding"/>
    <property type="evidence" value="ECO:0007669"/>
    <property type="project" value="UniProtKB-UniRule"/>
</dbReference>
<dbReference type="GO" id="GO:0006424">
    <property type="term" value="P:glutamyl-tRNA aminoacylation"/>
    <property type="evidence" value="ECO:0007669"/>
    <property type="project" value="UniProtKB-UniRule"/>
</dbReference>
<dbReference type="CDD" id="cd00808">
    <property type="entry name" value="GluRS_core"/>
    <property type="match status" value="1"/>
</dbReference>
<dbReference type="FunFam" id="1.10.10.350:FF:000001">
    <property type="entry name" value="Glutamate--tRNA ligase"/>
    <property type="match status" value="1"/>
</dbReference>
<dbReference type="FunFam" id="3.40.50.620:FF:000007">
    <property type="entry name" value="Glutamate--tRNA ligase"/>
    <property type="match status" value="1"/>
</dbReference>
<dbReference type="Gene3D" id="1.10.10.350">
    <property type="match status" value="1"/>
</dbReference>
<dbReference type="Gene3D" id="3.40.50.620">
    <property type="entry name" value="HUPs"/>
    <property type="match status" value="1"/>
</dbReference>
<dbReference type="HAMAP" id="MF_00022">
    <property type="entry name" value="Glu_tRNA_synth_type1"/>
    <property type="match status" value="1"/>
</dbReference>
<dbReference type="InterPro" id="IPR045462">
    <property type="entry name" value="aa-tRNA-synth_I_cd-bd"/>
</dbReference>
<dbReference type="InterPro" id="IPR020751">
    <property type="entry name" value="aa-tRNA-synth_I_codon-bd_sub2"/>
</dbReference>
<dbReference type="InterPro" id="IPR001412">
    <property type="entry name" value="aa-tRNA-synth_I_CS"/>
</dbReference>
<dbReference type="InterPro" id="IPR008925">
    <property type="entry name" value="aa_tRNA-synth_I_cd-bd_sf"/>
</dbReference>
<dbReference type="InterPro" id="IPR004527">
    <property type="entry name" value="Glu-tRNA-ligase_bac/mito"/>
</dbReference>
<dbReference type="InterPro" id="IPR000924">
    <property type="entry name" value="Glu/Gln-tRNA-synth"/>
</dbReference>
<dbReference type="InterPro" id="IPR020058">
    <property type="entry name" value="Glu/Gln-tRNA-synth_Ib_cat-dom"/>
</dbReference>
<dbReference type="InterPro" id="IPR049940">
    <property type="entry name" value="GluQ/Sye"/>
</dbReference>
<dbReference type="InterPro" id="IPR033910">
    <property type="entry name" value="GluRS_core"/>
</dbReference>
<dbReference type="InterPro" id="IPR014729">
    <property type="entry name" value="Rossmann-like_a/b/a_fold"/>
</dbReference>
<dbReference type="NCBIfam" id="TIGR00464">
    <property type="entry name" value="gltX_bact"/>
    <property type="match status" value="1"/>
</dbReference>
<dbReference type="PANTHER" id="PTHR43311">
    <property type="entry name" value="GLUTAMATE--TRNA LIGASE"/>
    <property type="match status" value="1"/>
</dbReference>
<dbReference type="PANTHER" id="PTHR43311:SF2">
    <property type="entry name" value="GLUTAMATE--TRNA LIGASE, MITOCHONDRIAL-RELATED"/>
    <property type="match status" value="1"/>
</dbReference>
<dbReference type="Pfam" id="PF19269">
    <property type="entry name" value="Anticodon_2"/>
    <property type="match status" value="1"/>
</dbReference>
<dbReference type="Pfam" id="PF00749">
    <property type="entry name" value="tRNA-synt_1c"/>
    <property type="match status" value="1"/>
</dbReference>
<dbReference type="PRINTS" id="PR00987">
    <property type="entry name" value="TRNASYNTHGLU"/>
</dbReference>
<dbReference type="SUPFAM" id="SSF48163">
    <property type="entry name" value="An anticodon-binding domain of class I aminoacyl-tRNA synthetases"/>
    <property type="match status" value="1"/>
</dbReference>
<dbReference type="SUPFAM" id="SSF52374">
    <property type="entry name" value="Nucleotidylyl transferase"/>
    <property type="match status" value="1"/>
</dbReference>
<dbReference type="PROSITE" id="PS00178">
    <property type="entry name" value="AA_TRNA_LIGASE_I"/>
    <property type="match status" value="1"/>
</dbReference>
<evidence type="ECO:0000255" key="1">
    <source>
        <dbReference type="HAMAP-Rule" id="MF_00022"/>
    </source>
</evidence>
<protein>
    <recommendedName>
        <fullName evidence="1">Glutamate--tRNA ligase</fullName>
        <ecNumber evidence="1">6.1.1.17</ecNumber>
    </recommendedName>
    <alternativeName>
        <fullName evidence="1">Glutamyl-tRNA synthetase</fullName>
        <shortName evidence="1">GluRS</shortName>
    </alternativeName>
</protein>
<accession>A4Y8D7</accession>
<proteinExistence type="inferred from homology"/>
<organism>
    <name type="scientific">Shewanella putrefaciens (strain CN-32 / ATCC BAA-453)</name>
    <dbReference type="NCBI Taxonomy" id="319224"/>
    <lineage>
        <taxon>Bacteria</taxon>
        <taxon>Pseudomonadati</taxon>
        <taxon>Pseudomonadota</taxon>
        <taxon>Gammaproteobacteria</taxon>
        <taxon>Alteromonadales</taxon>
        <taxon>Shewanellaceae</taxon>
        <taxon>Shewanella</taxon>
    </lineage>
</organism>